<proteinExistence type="inferred from homology"/>
<feature type="chain" id="PRO_0000282298" description="Conserved virulence factor B">
    <location>
        <begin position="1"/>
        <end position="298"/>
    </location>
</feature>
<gene>
    <name type="primary">cvfB</name>
    <name type="ordered locus">SE_1071</name>
</gene>
<name>CVFB_STAES</name>
<sequence>MALDKDIVGSIEFLEVVGLQGSTYLLKGPNGESVKLNQSEVAEEDDFELGEEYSFFVYPNRSGDLFATQNMPDITKDKYDFAKVIKTDRDGAHIDVGLPREVLVPWEDLPKLKELWPKAGDYLLVTLRIDSTNQMFGRLASETIVESMFTPVNDDSKQNEYISARAYRLLRVGSFLLSNEGYKIFVHESERKHEPRLGEAVEVRIIGHNEKGELNGSFLPLAHERLDDDGQVIFDLLVEYDGELPFWDKSSPDAIKEVFNMSKGSFKRAIGHLYKKKIINIETGKITLTKKGWSRVDD</sequence>
<protein>
    <recommendedName>
        <fullName>Conserved virulence factor B</fullName>
    </recommendedName>
</protein>
<dbReference type="EMBL" id="AE015929">
    <property type="protein sequence ID" value="AAO04668.1"/>
    <property type="molecule type" value="Genomic_DNA"/>
</dbReference>
<dbReference type="RefSeq" id="NP_764626.1">
    <property type="nucleotide sequence ID" value="NC_004461.1"/>
</dbReference>
<dbReference type="RefSeq" id="WP_002485050.1">
    <property type="nucleotide sequence ID" value="NZ_WBME01000002.1"/>
</dbReference>
<dbReference type="SMR" id="Q8CSN0"/>
<dbReference type="KEGG" id="sep:SE_1071"/>
<dbReference type="PATRIC" id="fig|176280.10.peg.1047"/>
<dbReference type="eggNOG" id="COG2996">
    <property type="taxonomic scope" value="Bacteria"/>
</dbReference>
<dbReference type="HOGENOM" id="CLU_064885_0_0_9"/>
<dbReference type="OrthoDB" id="9801597at2"/>
<dbReference type="Proteomes" id="UP000001411">
    <property type="component" value="Chromosome"/>
</dbReference>
<dbReference type="Gene3D" id="2.40.50.140">
    <property type="entry name" value="Nucleic acid-binding proteins"/>
    <property type="match status" value="2"/>
</dbReference>
<dbReference type="Gene3D" id="1.10.10.10">
    <property type="entry name" value="Winged helix-like DNA-binding domain superfamily/Winged helix DNA-binding domain"/>
    <property type="match status" value="1"/>
</dbReference>
<dbReference type="InterPro" id="IPR014464">
    <property type="entry name" value="CvfB_fam"/>
</dbReference>
<dbReference type="InterPro" id="IPR048588">
    <property type="entry name" value="CvfB_S1_2nd"/>
</dbReference>
<dbReference type="InterPro" id="IPR048587">
    <property type="entry name" value="CvfB_S1_3rd"/>
</dbReference>
<dbReference type="InterPro" id="IPR039566">
    <property type="entry name" value="CvfB_S1_st"/>
</dbReference>
<dbReference type="InterPro" id="IPR040764">
    <property type="entry name" value="CvfB_WH"/>
</dbReference>
<dbReference type="InterPro" id="IPR012340">
    <property type="entry name" value="NA-bd_OB-fold"/>
</dbReference>
<dbReference type="InterPro" id="IPR036388">
    <property type="entry name" value="WH-like_DNA-bd_sf"/>
</dbReference>
<dbReference type="PANTHER" id="PTHR37296">
    <property type="entry name" value="CONSERVED VIRULENCE FACTOR B"/>
    <property type="match status" value="1"/>
</dbReference>
<dbReference type="PANTHER" id="PTHR37296:SF1">
    <property type="entry name" value="CONSERVED VIRULENCE FACTOR B"/>
    <property type="match status" value="1"/>
</dbReference>
<dbReference type="Pfam" id="PF21191">
    <property type="entry name" value="CvfB_1st"/>
    <property type="match status" value="1"/>
</dbReference>
<dbReference type="Pfam" id="PF21543">
    <property type="entry name" value="CvfB_2nd"/>
    <property type="match status" value="1"/>
</dbReference>
<dbReference type="Pfam" id="PF17783">
    <property type="entry name" value="CvfB_WH"/>
    <property type="match status" value="1"/>
</dbReference>
<dbReference type="Pfam" id="PF13509">
    <property type="entry name" value="S1_2"/>
    <property type="match status" value="1"/>
</dbReference>
<dbReference type="PIRSF" id="PIRSF012524">
    <property type="entry name" value="YitL_S1"/>
    <property type="match status" value="1"/>
</dbReference>
<comment type="similarity">
    <text evidence="1">Belongs to the CvfB family.</text>
</comment>
<organism>
    <name type="scientific">Staphylococcus epidermidis (strain ATCC 12228 / FDA PCI 1200)</name>
    <dbReference type="NCBI Taxonomy" id="176280"/>
    <lineage>
        <taxon>Bacteria</taxon>
        <taxon>Bacillati</taxon>
        <taxon>Bacillota</taxon>
        <taxon>Bacilli</taxon>
        <taxon>Bacillales</taxon>
        <taxon>Staphylococcaceae</taxon>
        <taxon>Staphylococcus</taxon>
    </lineage>
</organism>
<evidence type="ECO:0000305" key="1"/>
<reference key="1">
    <citation type="journal article" date="2003" name="Mol. Microbiol.">
        <title>Genome-based analysis of virulence genes in a non-biofilm-forming Staphylococcus epidermidis strain (ATCC 12228).</title>
        <authorList>
            <person name="Zhang Y.-Q."/>
            <person name="Ren S.-X."/>
            <person name="Li H.-L."/>
            <person name="Wang Y.-X."/>
            <person name="Fu G."/>
            <person name="Yang J."/>
            <person name="Qin Z.-Q."/>
            <person name="Miao Y.-G."/>
            <person name="Wang W.-Y."/>
            <person name="Chen R.-S."/>
            <person name="Shen Y."/>
            <person name="Chen Z."/>
            <person name="Yuan Z.-H."/>
            <person name="Zhao G.-P."/>
            <person name="Qu D."/>
            <person name="Danchin A."/>
            <person name="Wen Y.-M."/>
        </authorList>
    </citation>
    <scope>NUCLEOTIDE SEQUENCE [LARGE SCALE GENOMIC DNA]</scope>
    <source>
        <strain>ATCC 12228 / FDA PCI 1200</strain>
    </source>
</reference>
<accession>Q8CSN0</accession>